<organism>
    <name type="scientific">Burkholderia mallei (strain ATCC 23344)</name>
    <dbReference type="NCBI Taxonomy" id="243160"/>
    <lineage>
        <taxon>Bacteria</taxon>
        <taxon>Pseudomonadati</taxon>
        <taxon>Pseudomonadota</taxon>
        <taxon>Betaproteobacteria</taxon>
        <taxon>Burkholderiales</taxon>
        <taxon>Burkholderiaceae</taxon>
        <taxon>Burkholderia</taxon>
        <taxon>pseudomallei group</taxon>
    </lineage>
</organism>
<gene>
    <name type="primary">norM</name>
    <name type="ordered locus">BMA0502</name>
</gene>
<dbReference type="EMBL" id="CP000010">
    <property type="protein sequence ID" value="AAU49273.1"/>
    <property type="molecule type" value="Genomic_DNA"/>
</dbReference>
<dbReference type="RefSeq" id="WP_004189199.1">
    <property type="nucleotide sequence ID" value="NC_006348.1"/>
</dbReference>
<dbReference type="RefSeq" id="YP_102302.1">
    <property type="nucleotide sequence ID" value="NC_006348.1"/>
</dbReference>
<dbReference type="SMR" id="Q62LW6"/>
<dbReference type="KEGG" id="bma:BMA0502"/>
<dbReference type="PATRIC" id="fig|243160.12.peg.516"/>
<dbReference type="eggNOG" id="COG0534">
    <property type="taxonomic scope" value="Bacteria"/>
</dbReference>
<dbReference type="HOGENOM" id="CLU_012893_6_3_4"/>
<dbReference type="Proteomes" id="UP000006693">
    <property type="component" value="Chromosome 1"/>
</dbReference>
<dbReference type="GO" id="GO:0005886">
    <property type="term" value="C:plasma membrane"/>
    <property type="evidence" value="ECO:0007669"/>
    <property type="project" value="UniProtKB-SubCell"/>
</dbReference>
<dbReference type="GO" id="GO:0015297">
    <property type="term" value="F:antiporter activity"/>
    <property type="evidence" value="ECO:0007669"/>
    <property type="project" value="UniProtKB-KW"/>
</dbReference>
<dbReference type="GO" id="GO:0042910">
    <property type="term" value="F:xenobiotic transmembrane transporter activity"/>
    <property type="evidence" value="ECO:0007669"/>
    <property type="project" value="InterPro"/>
</dbReference>
<dbReference type="GO" id="GO:0006811">
    <property type="term" value="P:monoatomic ion transport"/>
    <property type="evidence" value="ECO:0007669"/>
    <property type="project" value="UniProtKB-KW"/>
</dbReference>
<dbReference type="CDD" id="cd13131">
    <property type="entry name" value="MATE_NorM_like"/>
    <property type="match status" value="1"/>
</dbReference>
<dbReference type="InterPro" id="IPR002528">
    <property type="entry name" value="MATE_fam"/>
</dbReference>
<dbReference type="InterPro" id="IPR050222">
    <property type="entry name" value="MATE_MdtK"/>
</dbReference>
<dbReference type="InterPro" id="IPR048279">
    <property type="entry name" value="MdtK-like"/>
</dbReference>
<dbReference type="NCBIfam" id="TIGR00797">
    <property type="entry name" value="matE"/>
    <property type="match status" value="1"/>
</dbReference>
<dbReference type="PANTHER" id="PTHR43298:SF2">
    <property type="entry name" value="FMN_FAD EXPORTER YEEO-RELATED"/>
    <property type="match status" value="1"/>
</dbReference>
<dbReference type="PANTHER" id="PTHR43298">
    <property type="entry name" value="MULTIDRUG RESISTANCE PROTEIN NORM-RELATED"/>
    <property type="match status" value="1"/>
</dbReference>
<dbReference type="Pfam" id="PF01554">
    <property type="entry name" value="MatE"/>
    <property type="match status" value="2"/>
</dbReference>
<dbReference type="PIRSF" id="PIRSF006603">
    <property type="entry name" value="DinF"/>
    <property type="match status" value="1"/>
</dbReference>
<accession>Q62LW6</accession>
<comment type="function">
    <text evidence="1">Multidrug efflux pump.</text>
</comment>
<comment type="subcellular location">
    <subcellularLocation>
        <location evidence="1">Cell inner membrane</location>
        <topology evidence="1">Multi-pass membrane protein</topology>
    </subcellularLocation>
</comment>
<comment type="similarity">
    <text evidence="3">Belongs to the multi antimicrobial extrusion (MATE) (TC 2.A.66.1) family.</text>
</comment>
<name>NORM_BURMA</name>
<feature type="chain" id="PRO_0000164211" description="Probable multidrug resistance protein NorM">
    <location>
        <begin position="1"/>
        <end position="468"/>
    </location>
</feature>
<feature type="transmembrane region" description="Helical" evidence="2">
    <location>
        <begin position="57"/>
        <end position="79"/>
    </location>
</feature>
<feature type="transmembrane region" description="Helical" evidence="2">
    <location>
        <begin position="100"/>
        <end position="122"/>
    </location>
</feature>
<feature type="transmembrane region" description="Helical" evidence="2">
    <location>
        <begin position="142"/>
        <end position="164"/>
    </location>
</feature>
<feature type="transmembrane region" description="Helical" evidence="2">
    <location>
        <begin position="173"/>
        <end position="195"/>
    </location>
</feature>
<feature type="transmembrane region" description="Helical" evidence="2">
    <location>
        <begin position="205"/>
        <end position="227"/>
    </location>
</feature>
<feature type="transmembrane region" description="Helical" evidence="2">
    <location>
        <begin position="248"/>
        <end position="270"/>
    </location>
</feature>
<feature type="transmembrane region" description="Helical" evidence="2">
    <location>
        <begin position="280"/>
        <end position="302"/>
    </location>
</feature>
<feature type="transmembrane region" description="Helical" evidence="2">
    <location>
        <begin position="323"/>
        <end position="345"/>
    </location>
</feature>
<feature type="transmembrane region" description="Helical" evidence="2">
    <location>
        <begin position="360"/>
        <end position="382"/>
    </location>
</feature>
<feature type="transmembrane region" description="Helical" evidence="2">
    <location>
        <begin position="401"/>
        <end position="423"/>
    </location>
</feature>
<feature type="transmembrane region" description="Helical" evidence="2">
    <location>
        <begin position="433"/>
        <end position="452"/>
    </location>
</feature>
<sequence length="468" mass="48189">MSPTGFTRAAAAPPPTLSRHAADTARLAAPLAIAQLSQMAMSVTDTVLLGSLGPDALAAGGLGANLFFVVVTLLQGVLTSVSVSVAHARGAMAEDRVPHIYWTGFALSLLLAVPAFALLSFAQPLLLAFGEPAALARNVGEYAAVLRFAAPGSLIGVGLMRSFLPAIGAAKRLLWVSLAGVGVNAFLNYGLIHGAFGLPRLGFLGSATATTITIWLTAITLVALLHGRSTFRHFVAATRPRLPLMGELFGIGWPVAITYGVESTLFLATGLTVGVLGESSLAAHQIALNVASVAFMVPLAIGQAANVRVGYWAGAGAPVAARHAGFVALGLGVAFMSLSGLVLIVAPHAIVGLYLKLDDPANARTVVLATSLLGIAAVFQIVDGMQTVGSGCLRGLKDTRVPMLAATLGYWGIGFPTGYWFAFHAGLGARGLWWGLAAGLASVAMLMTWRFHRKSAALGVRADARGQA</sequence>
<proteinExistence type="inferred from homology"/>
<evidence type="ECO:0000250" key="1"/>
<evidence type="ECO:0000255" key="2"/>
<evidence type="ECO:0000305" key="3"/>
<protein>
    <recommendedName>
        <fullName>Probable multidrug resistance protein NorM</fullName>
    </recommendedName>
    <alternativeName>
        <fullName>Multidrug-efflux transporter</fullName>
    </alternativeName>
</protein>
<reference key="1">
    <citation type="journal article" date="2004" name="Proc. Natl. Acad. Sci. U.S.A.">
        <title>Structural flexibility in the Burkholderia mallei genome.</title>
        <authorList>
            <person name="Nierman W.C."/>
            <person name="DeShazer D."/>
            <person name="Kim H.S."/>
            <person name="Tettelin H."/>
            <person name="Nelson K.E."/>
            <person name="Feldblyum T.V."/>
            <person name="Ulrich R.L."/>
            <person name="Ronning C.M."/>
            <person name="Brinkac L.M."/>
            <person name="Daugherty S.C."/>
            <person name="Davidsen T.D."/>
            <person name="DeBoy R.T."/>
            <person name="Dimitrov G."/>
            <person name="Dodson R.J."/>
            <person name="Durkin A.S."/>
            <person name="Gwinn M.L."/>
            <person name="Haft D.H."/>
            <person name="Khouri H.M."/>
            <person name="Kolonay J.F."/>
            <person name="Madupu R."/>
            <person name="Mohammoud Y."/>
            <person name="Nelson W.C."/>
            <person name="Radune D."/>
            <person name="Romero C.M."/>
            <person name="Sarria S."/>
            <person name="Selengut J."/>
            <person name="Shamblin C."/>
            <person name="Sullivan S.A."/>
            <person name="White O."/>
            <person name="Yu Y."/>
            <person name="Zafar N."/>
            <person name="Zhou L."/>
            <person name="Fraser C.M."/>
        </authorList>
    </citation>
    <scope>NUCLEOTIDE SEQUENCE [LARGE SCALE GENOMIC DNA]</scope>
    <source>
        <strain>ATCC 23344</strain>
    </source>
</reference>
<keyword id="KW-0050">Antiport</keyword>
<keyword id="KW-0997">Cell inner membrane</keyword>
<keyword id="KW-1003">Cell membrane</keyword>
<keyword id="KW-0406">Ion transport</keyword>
<keyword id="KW-0472">Membrane</keyword>
<keyword id="KW-1185">Reference proteome</keyword>
<keyword id="KW-0812">Transmembrane</keyword>
<keyword id="KW-1133">Transmembrane helix</keyword>
<keyword id="KW-0813">Transport</keyword>